<keyword id="KW-0968">Cytoplasmic vesicle</keyword>
<keyword id="KW-0256">Endoplasmic reticulum</keyword>
<keyword id="KW-0931">ER-Golgi transport</keyword>
<keyword id="KW-0472">Membrane</keyword>
<keyword id="KW-0479">Metal-binding</keyword>
<keyword id="KW-0653">Protein transport</keyword>
<keyword id="KW-1185">Reference proteome</keyword>
<keyword id="KW-0813">Transport</keyword>
<keyword id="KW-0862">Zinc</keyword>
<sequence>MDFLELEAIEGLRWSWNSWPTTKSDCESLVVPLSIMYTPLMHFSELPTIPYDPLICSRCGAVLNPYARVDYQSRIWSCPFCFHKNLFPRSYSGITETNLPAELFPTYSAVEYSPLPSRQSGSNTTTPTAAASWSNGFNQGVRSMPSNSSFSSLASSTVGGGGGVISELGPAFVFVVDASMVEDELRAVRSDVLFVIEQLPENCLVALITFDSMVRVYDLGFSECSKVVVFHGERDLSPDQIQQFLGLGYSKQFHHGKMSAIRKQSFLLPLVECEFNLTSAFEEIIPLVDVKPGHRPHRSTGAAISTALGLLEGCSVTTGSRIMVFTSGPATRGPGIIVDSDLSNSIRTHRDIITGHVSYYDKSCGFYKKLAKRLCDSSVVLDVFACSLDQVGAAELRYAVEMSGGFLLLGETFESEQFKKCLRHIFIRDADGNLSMYFDVSLEVVTTKDMRICGALGPVVSLRQKNDIVSETEIGEGGTYMWKTSTVTNKTCVSFFFHVSNEQNRKPQPGSAFFIQFITRYRYGNGAMRKRVTTVARRWVAGKSPEISSSFDQETAASVMARLAINRAEECHARDVITWLDNGLIRFASRFGDYIQEDPSSFRLTPNFSLYPQFMFYLRRSQFLDVFNNSPDETGFFRLMLNREGVVNSIIMIQPTLLRYSFDGPPVPVLLDIRSVTPDVILLFDSYFYVVIHHGSKIAQWRKLEYHKDPSHETFRNLLEAPEIDAAQLVTDRIPMPRIVRCDQHGSQARFLLAKLNPSVTQKTDHTGGSDIVLTDDMSLQDFLEDLQSLAVKG</sequence>
<feature type="chain" id="PRO_0000457107" description="Protein transport protein SEC23 G">
    <location>
        <begin position="1"/>
        <end position="794"/>
    </location>
</feature>
<feature type="region of interest" description="Zinc finger-like" evidence="1">
    <location>
        <begin position="56"/>
        <end position="81"/>
    </location>
</feature>
<feature type="binding site" evidence="2">
    <location>
        <position position="56"/>
    </location>
    <ligand>
        <name>Zn(2+)</name>
        <dbReference type="ChEBI" id="CHEBI:29105"/>
    </ligand>
</feature>
<feature type="binding site" evidence="2">
    <location>
        <position position="59"/>
    </location>
    <ligand>
        <name>Zn(2+)</name>
        <dbReference type="ChEBI" id="CHEBI:29105"/>
    </ligand>
</feature>
<feature type="binding site" evidence="2">
    <location>
        <position position="78"/>
    </location>
    <ligand>
        <name>Zn(2+)</name>
        <dbReference type="ChEBI" id="CHEBI:29105"/>
    </ligand>
</feature>
<feature type="binding site" evidence="2">
    <location>
        <position position="81"/>
    </location>
    <ligand>
        <name>Zn(2+)</name>
        <dbReference type="ChEBI" id="CHEBI:29105"/>
    </ligand>
</feature>
<accession>Q84WI4</accession>
<accession>Q9FG78</accession>
<evidence type="ECO:0000250" key="1">
    <source>
        <dbReference type="UniProtKB" id="O95486"/>
    </source>
</evidence>
<evidence type="ECO:0000250" key="2">
    <source>
        <dbReference type="UniProtKB" id="P15303"/>
    </source>
</evidence>
<evidence type="ECO:0000269" key="3">
    <source>
    </source>
</evidence>
<evidence type="ECO:0000269" key="4">
    <source>
    </source>
</evidence>
<evidence type="ECO:0000303" key="5">
    <source>
    </source>
</evidence>
<evidence type="ECO:0000303" key="6">
    <source>
    </source>
</evidence>
<evidence type="ECO:0000303" key="7">
    <source>
    </source>
</evidence>
<evidence type="ECO:0000305" key="8"/>
<evidence type="ECO:0000312" key="9">
    <source>
        <dbReference type="Araport" id="AT5G43670"/>
    </source>
</evidence>
<evidence type="ECO:0000312" key="10">
    <source>
        <dbReference type="EMBL" id="BAB08946.1"/>
    </source>
</evidence>
<gene>
    <name evidence="7" type="primary">SEC23G</name>
    <name evidence="6" type="synonym">SEC23C</name>
    <name evidence="5" type="synonym">SEC23E</name>
    <name evidence="9" type="ordered locus">At5g43670</name>
    <name evidence="10" type="ORF">MQO24.2</name>
</gene>
<dbReference type="EMBL" id="AB026652">
    <property type="protein sequence ID" value="BAB08946.1"/>
    <property type="status" value="ALT_SEQ"/>
    <property type="molecule type" value="Genomic_DNA"/>
</dbReference>
<dbReference type="EMBL" id="CP002688">
    <property type="protein sequence ID" value="AED94993.1"/>
    <property type="molecule type" value="Genomic_DNA"/>
</dbReference>
<dbReference type="EMBL" id="BT003332">
    <property type="protein sequence ID" value="AAO29951.1"/>
    <property type="molecule type" value="mRNA"/>
</dbReference>
<dbReference type="EMBL" id="BT010350">
    <property type="protein sequence ID" value="AAQ56793.1"/>
    <property type="molecule type" value="mRNA"/>
</dbReference>
<dbReference type="RefSeq" id="NP_568626.1">
    <property type="nucleotide sequence ID" value="NM_123733.2"/>
</dbReference>
<dbReference type="SMR" id="Q84WI4"/>
<dbReference type="FunCoup" id="Q84WI4">
    <property type="interactions" value="202"/>
</dbReference>
<dbReference type="IntAct" id="Q84WI4">
    <property type="interactions" value="3"/>
</dbReference>
<dbReference type="STRING" id="3702.Q84WI4"/>
<dbReference type="iPTMnet" id="Q84WI4"/>
<dbReference type="PaxDb" id="3702-AT5G43670.1"/>
<dbReference type="ProteomicsDB" id="179685"/>
<dbReference type="EnsemblPlants" id="AT5G43670.1">
    <property type="protein sequence ID" value="AT5G43670.1"/>
    <property type="gene ID" value="AT5G43670"/>
</dbReference>
<dbReference type="GeneID" id="834387"/>
<dbReference type="Gramene" id="AT5G43670.1">
    <property type="protein sequence ID" value="AT5G43670.1"/>
    <property type="gene ID" value="AT5G43670"/>
</dbReference>
<dbReference type="KEGG" id="ath:AT5G43670"/>
<dbReference type="Araport" id="AT5G43670"/>
<dbReference type="TAIR" id="AT5G43670">
    <property type="gene designation" value="ATSEC23G"/>
</dbReference>
<dbReference type="eggNOG" id="KOG1986">
    <property type="taxonomic scope" value="Eukaryota"/>
</dbReference>
<dbReference type="HOGENOM" id="CLU_008658_3_0_1"/>
<dbReference type="InParanoid" id="Q84WI4"/>
<dbReference type="OMA" id="LFHGERE"/>
<dbReference type="PRO" id="PR:Q84WI4"/>
<dbReference type="Proteomes" id="UP000006548">
    <property type="component" value="Chromosome 5"/>
</dbReference>
<dbReference type="ExpressionAtlas" id="Q84WI4">
    <property type="expression patterns" value="baseline and differential"/>
</dbReference>
<dbReference type="GO" id="GO:0030127">
    <property type="term" value="C:COPII vesicle coat"/>
    <property type="evidence" value="ECO:0007669"/>
    <property type="project" value="InterPro"/>
</dbReference>
<dbReference type="GO" id="GO:0005789">
    <property type="term" value="C:endoplasmic reticulum membrane"/>
    <property type="evidence" value="ECO:0007669"/>
    <property type="project" value="UniProtKB-SubCell"/>
</dbReference>
<dbReference type="GO" id="GO:0008270">
    <property type="term" value="F:zinc ion binding"/>
    <property type="evidence" value="ECO:0007669"/>
    <property type="project" value="InterPro"/>
</dbReference>
<dbReference type="GO" id="GO:0090114">
    <property type="term" value="P:COPII-coated vesicle budding"/>
    <property type="evidence" value="ECO:0007669"/>
    <property type="project" value="InterPro"/>
</dbReference>
<dbReference type="GO" id="GO:0006886">
    <property type="term" value="P:intracellular protein transport"/>
    <property type="evidence" value="ECO:0007669"/>
    <property type="project" value="InterPro"/>
</dbReference>
<dbReference type="CDD" id="cd11287">
    <property type="entry name" value="Sec23_C"/>
    <property type="match status" value="1"/>
</dbReference>
<dbReference type="FunFam" id="2.30.30.380:FF:000001">
    <property type="entry name" value="Protein transport protein SEC23"/>
    <property type="match status" value="1"/>
</dbReference>
<dbReference type="FunFam" id="2.60.40.1670:FF:000010">
    <property type="entry name" value="Protein transport protein SEC23"/>
    <property type="match status" value="1"/>
</dbReference>
<dbReference type="FunFam" id="3.40.20.10:FF:000014">
    <property type="entry name" value="Protein transport protein SEC23"/>
    <property type="match status" value="1"/>
</dbReference>
<dbReference type="FunFam" id="3.40.50.410:FF:000043">
    <property type="entry name" value="Protein transport protein SEC23"/>
    <property type="match status" value="1"/>
</dbReference>
<dbReference type="Gene3D" id="2.60.40.1670">
    <property type="entry name" value="beta-sandwich domain of Sec23/24"/>
    <property type="match status" value="1"/>
</dbReference>
<dbReference type="Gene3D" id="1.20.120.730">
    <property type="entry name" value="Sec23/Sec24 helical domain"/>
    <property type="match status" value="1"/>
</dbReference>
<dbReference type="Gene3D" id="3.40.20.10">
    <property type="entry name" value="Severin"/>
    <property type="match status" value="1"/>
</dbReference>
<dbReference type="Gene3D" id="3.40.50.410">
    <property type="entry name" value="von Willebrand factor, type A domain"/>
    <property type="match status" value="1"/>
</dbReference>
<dbReference type="Gene3D" id="2.30.30.380">
    <property type="entry name" value="Zn-finger domain of Sec23/24"/>
    <property type="match status" value="1"/>
</dbReference>
<dbReference type="InterPro" id="IPR029006">
    <property type="entry name" value="ADF-H/Gelsolin-like_dom_sf"/>
</dbReference>
<dbReference type="InterPro" id="IPR007123">
    <property type="entry name" value="Gelsolin-like_dom"/>
</dbReference>
<dbReference type="InterPro" id="IPR036180">
    <property type="entry name" value="Gelsolin-like_dom_sf"/>
</dbReference>
<dbReference type="InterPro" id="IPR037364">
    <property type="entry name" value="Sec23"/>
</dbReference>
<dbReference type="InterPro" id="IPR006900">
    <property type="entry name" value="Sec23/24_helical_dom"/>
</dbReference>
<dbReference type="InterPro" id="IPR036175">
    <property type="entry name" value="Sec23/24_helical_dom_sf"/>
</dbReference>
<dbReference type="InterPro" id="IPR006896">
    <property type="entry name" value="Sec23/24_trunk_dom"/>
</dbReference>
<dbReference type="InterPro" id="IPR012990">
    <property type="entry name" value="Sec23_24_beta_S"/>
</dbReference>
<dbReference type="InterPro" id="IPR037550">
    <property type="entry name" value="Sec23_C"/>
</dbReference>
<dbReference type="InterPro" id="IPR036465">
    <property type="entry name" value="vWFA_dom_sf"/>
</dbReference>
<dbReference type="InterPro" id="IPR006895">
    <property type="entry name" value="Znf_Sec23_Sec24"/>
</dbReference>
<dbReference type="InterPro" id="IPR036174">
    <property type="entry name" value="Znf_Sec23_Sec24_sf"/>
</dbReference>
<dbReference type="PANTHER" id="PTHR11141">
    <property type="entry name" value="PROTEIN TRANSPORT PROTEIN SEC23"/>
    <property type="match status" value="1"/>
</dbReference>
<dbReference type="PANTHER" id="PTHR11141:SF22">
    <property type="entry name" value="PROTEIN TRANSPORT PROTEIN SEC23 G"/>
    <property type="match status" value="1"/>
</dbReference>
<dbReference type="Pfam" id="PF00626">
    <property type="entry name" value="Gelsolin"/>
    <property type="match status" value="1"/>
</dbReference>
<dbReference type="Pfam" id="PF08033">
    <property type="entry name" value="Sec23_BS"/>
    <property type="match status" value="1"/>
</dbReference>
<dbReference type="Pfam" id="PF04815">
    <property type="entry name" value="Sec23_helical"/>
    <property type="match status" value="1"/>
</dbReference>
<dbReference type="Pfam" id="PF04811">
    <property type="entry name" value="Sec23_trunk"/>
    <property type="match status" value="1"/>
</dbReference>
<dbReference type="Pfam" id="PF04810">
    <property type="entry name" value="zf-Sec23_Sec24"/>
    <property type="match status" value="1"/>
</dbReference>
<dbReference type="SUPFAM" id="SSF81995">
    <property type="entry name" value="beta-sandwich domain of Sec23/24"/>
    <property type="match status" value="1"/>
</dbReference>
<dbReference type="SUPFAM" id="SSF82754">
    <property type="entry name" value="C-terminal, gelsolin-like domain of Sec23/24"/>
    <property type="match status" value="1"/>
</dbReference>
<dbReference type="SUPFAM" id="SSF81811">
    <property type="entry name" value="Helical domain of Sec23/24"/>
    <property type="match status" value="1"/>
</dbReference>
<dbReference type="SUPFAM" id="SSF53300">
    <property type="entry name" value="vWA-like"/>
    <property type="match status" value="1"/>
</dbReference>
<dbReference type="SUPFAM" id="SSF82919">
    <property type="entry name" value="Zn-finger domain of Sec23/24"/>
    <property type="match status" value="1"/>
</dbReference>
<proteinExistence type="evidence at protein level"/>
<comment type="function">
    <text evidence="3">Component of the coat protein complex II (COPII) which promotes the formation of transport vesicles from the endoplasmic reticulum (ER) (PubMed:24587212). The coat has two main functions, the physical deformation of the endoplasmic reticulum membrane into vesicles and the selection of cargo molecules (PubMed:24587212).</text>
</comment>
<comment type="subunit">
    <text evidence="1 4">Component of the coat protein complex II (COPII), composed of at least five proteins: the Sec23/24 complex, the Sec13/31 complex and Sar1 (By similarity). Interacts with SEC24A (PubMed:25315606).</text>
</comment>
<comment type="subcellular location">
    <subcellularLocation>
        <location evidence="2">Cytoplasmic vesicle</location>
        <location evidence="2">COPII-coated vesicle membrane</location>
        <topology evidence="2">Peripheral membrane protein</topology>
        <orientation evidence="2">Cytoplasmic side</orientation>
    </subcellularLocation>
    <subcellularLocation>
        <location evidence="2">Endoplasmic reticulum membrane</location>
        <topology evidence="2">Peripheral membrane protein</topology>
        <orientation evidence="2">Cytoplasmic side</orientation>
    </subcellularLocation>
    <subcellularLocation>
        <location evidence="2">Membrane</location>
        <topology evidence="2">Peripheral membrane protein</topology>
        <orientation evidence="2">Cytoplasmic side</orientation>
    </subcellularLocation>
</comment>
<comment type="similarity">
    <text evidence="8">Belongs to the SEC23/SEC24 family. SEC23 subfamily.</text>
</comment>
<comment type="sequence caution" evidence="8">
    <conflict type="erroneous gene model prediction">
        <sequence resource="EMBL-CDS" id="BAB08946"/>
    </conflict>
</comment>
<organism>
    <name type="scientific">Arabidopsis thaliana</name>
    <name type="common">Mouse-ear cress</name>
    <dbReference type="NCBI Taxonomy" id="3702"/>
    <lineage>
        <taxon>Eukaryota</taxon>
        <taxon>Viridiplantae</taxon>
        <taxon>Streptophyta</taxon>
        <taxon>Embryophyta</taxon>
        <taxon>Tracheophyta</taxon>
        <taxon>Spermatophyta</taxon>
        <taxon>Magnoliopsida</taxon>
        <taxon>eudicotyledons</taxon>
        <taxon>Gunneridae</taxon>
        <taxon>Pentapetalae</taxon>
        <taxon>rosids</taxon>
        <taxon>malvids</taxon>
        <taxon>Brassicales</taxon>
        <taxon>Brassicaceae</taxon>
        <taxon>Camelineae</taxon>
        <taxon>Arabidopsis</taxon>
    </lineage>
</organism>
<name>SC23G_ARATH</name>
<reference key="1">
    <citation type="submission" date="1999-04" db="EMBL/GenBank/DDBJ databases">
        <title>Structural analysis of Arabidopsis thaliana chromosome 5. XI.</title>
        <authorList>
            <person name="Kaneko T."/>
            <person name="Katoh T."/>
            <person name="Asamizu E."/>
            <person name="Sato S."/>
            <person name="Nakamura Y."/>
            <person name="Kotani H."/>
            <person name="Tabata S."/>
        </authorList>
    </citation>
    <scope>NUCLEOTIDE SEQUENCE [LARGE SCALE GENOMIC DNA]</scope>
    <source>
        <strain>cv. Columbia</strain>
    </source>
</reference>
<reference key="2">
    <citation type="journal article" date="2017" name="Plant J.">
        <title>Araport11: a complete reannotation of the Arabidopsis thaliana reference genome.</title>
        <authorList>
            <person name="Cheng C.Y."/>
            <person name="Krishnakumar V."/>
            <person name="Chan A.P."/>
            <person name="Thibaud-Nissen F."/>
            <person name="Schobel S."/>
            <person name="Town C.D."/>
        </authorList>
    </citation>
    <scope>GENOME REANNOTATION</scope>
    <source>
        <strain>cv. Columbia</strain>
    </source>
</reference>
<reference key="3">
    <citation type="journal article" date="2003" name="Science">
        <title>Empirical analysis of transcriptional activity in the Arabidopsis genome.</title>
        <authorList>
            <person name="Yamada K."/>
            <person name="Lim J."/>
            <person name="Dale J.M."/>
            <person name="Chen H."/>
            <person name="Shinn P."/>
            <person name="Palm C.J."/>
            <person name="Southwick A.M."/>
            <person name="Wu H.C."/>
            <person name="Kim C.J."/>
            <person name="Nguyen M."/>
            <person name="Pham P.K."/>
            <person name="Cheuk R.F."/>
            <person name="Karlin-Newmann G."/>
            <person name="Liu S.X."/>
            <person name="Lam B."/>
            <person name="Sakano H."/>
            <person name="Wu T."/>
            <person name="Yu G."/>
            <person name="Miranda M."/>
            <person name="Quach H.L."/>
            <person name="Tripp M."/>
            <person name="Chang C.H."/>
            <person name="Lee J.M."/>
            <person name="Toriumi M.J."/>
            <person name="Chan M.M."/>
            <person name="Tang C.C."/>
            <person name="Onodera C.S."/>
            <person name="Deng J.M."/>
            <person name="Akiyama K."/>
            <person name="Ansari Y."/>
            <person name="Arakawa T."/>
            <person name="Banh J."/>
            <person name="Banno F."/>
            <person name="Bowser L."/>
            <person name="Brooks S.Y."/>
            <person name="Carninci P."/>
            <person name="Chao Q."/>
            <person name="Choy N."/>
            <person name="Enju A."/>
            <person name="Goldsmith A.D."/>
            <person name="Gurjal M."/>
            <person name="Hansen N.F."/>
            <person name="Hayashizaki Y."/>
            <person name="Johnson-Hopson C."/>
            <person name="Hsuan V.W."/>
            <person name="Iida K."/>
            <person name="Karnes M."/>
            <person name="Khan S."/>
            <person name="Koesema E."/>
            <person name="Ishida J."/>
            <person name="Jiang P.X."/>
            <person name="Jones T."/>
            <person name="Kawai J."/>
            <person name="Kamiya A."/>
            <person name="Meyers C."/>
            <person name="Nakajima M."/>
            <person name="Narusaka M."/>
            <person name="Seki M."/>
            <person name="Sakurai T."/>
            <person name="Satou M."/>
            <person name="Tamse R."/>
            <person name="Vaysberg M."/>
            <person name="Wallender E.K."/>
            <person name="Wong C."/>
            <person name="Yamamura Y."/>
            <person name="Yuan S."/>
            <person name="Shinozaki K."/>
            <person name="Davis R.W."/>
            <person name="Theologis A."/>
            <person name="Ecker J.R."/>
        </authorList>
    </citation>
    <scope>NUCLEOTIDE SEQUENCE [LARGE SCALE MRNA]</scope>
    <source>
        <strain>cv. Columbia</strain>
    </source>
</reference>
<reference key="4">
    <citation type="journal article" date="2014" name="Plant Physiol.">
        <title>Endomembrane trafficking protein SEC24A regulates cell size patterning in Arabidopsis.</title>
        <authorList>
            <person name="Qu X."/>
            <person name="Chatty P.R."/>
            <person name="Roeder A.H.K."/>
        </authorList>
    </citation>
    <scope>INTERACTION WITH SEC24A</scope>
    <scope>GENE FAMILY</scope>
    <source>
        <strain>cv. Landsberg erecta</strain>
    </source>
</reference>
<reference key="5">
    <citation type="journal article" date="2014" name="PLoS ONE">
        <title>Study of the plant COPII vesicle coat subunits by functional complementation of yeast Saccharomyces cerevisiae mutants.</title>
        <authorList>
            <person name="De Craene J.-O."/>
            <person name="Courte F."/>
            <person name="Rinaldi B."/>
            <person name="Fitterer C."/>
            <person name="Herranz M.C."/>
            <person name="Schmitt-Keichinger C."/>
            <person name="Ritzenthaler C."/>
            <person name="Friant S."/>
        </authorList>
    </citation>
    <scope>FUNCTION</scope>
    <scope>GENE FAMILY</scope>
    <source>
        <strain>cv. Columbia</strain>
    </source>
</reference>
<reference key="6">
    <citation type="journal article" date="2016" name="Trends Plant Sci.">
        <title>COPII paralogs in plants: functional redundancy or diversity?</title>
        <authorList>
            <person name="Chung K.P."/>
            <person name="Zeng Y."/>
            <person name="Jiang L."/>
        </authorList>
    </citation>
    <scope>REVIEW ON COAT PROTEIN COMPLEX II (COPII) VESICLES</scope>
    <scope>GENE FAMILY</scope>
    <scope>NOMENCLATURE</scope>
</reference>
<protein>
    <recommendedName>
        <fullName evidence="7">Protein transport protein SEC23 G</fullName>
        <shortName evidence="7">AtSEC23G</shortName>
    </recommendedName>
    <alternativeName>
        <fullName evidence="6">Protein transport protein SEC23 C</fullName>
    </alternativeName>
    <alternativeName>
        <fullName evidence="5">Protein transport protein SEC23 E</fullName>
        <shortName evidence="5">AtSEC23E</shortName>
    </alternativeName>
</protein>